<feature type="chain" id="PRO_1000050684" description="Large ribosomal subunit protein bL35">
    <location>
        <begin position="1"/>
        <end position="65"/>
    </location>
</feature>
<comment type="similarity">
    <text evidence="1">Belongs to the bacterial ribosomal protein bL35 family.</text>
</comment>
<proteinExistence type="inferred from homology"/>
<evidence type="ECO:0000255" key="1">
    <source>
        <dbReference type="HAMAP-Rule" id="MF_00514"/>
    </source>
</evidence>
<evidence type="ECO:0000305" key="2"/>
<reference key="1">
    <citation type="submission" date="2007-02" db="EMBL/GenBank/DDBJ databases">
        <title>Complete sequence of Clostridium thermocellum ATCC 27405.</title>
        <authorList>
            <consortium name="US DOE Joint Genome Institute"/>
            <person name="Copeland A."/>
            <person name="Lucas S."/>
            <person name="Lapidus A."/>
            <person name="Barry K."/>
            <person name="Detter J.C."/>
            <person name="Glavina del Rio T."/>
            <person name="Hammon N."/>
            <person name="Israni S."/>
            <person name="Dalin E."/>
            <person name="Tice H."/>
            <person name="Pitluck S."/>
            <person name="Chertkov O."/>
            <person name="Brettin T."/>
            <person name="Bruce D."/>
            <person name="Han C."/>
            <person name="Tapia R."/>
            <person name="Gilna P."/>
            <person name="Schmutz J."/>
            <person name="Larimer F."/>
            <person name="Land M."/>
            <person name="Hauser L."/>
            <person name="Kyrpides N."/>
            <person name="Mikhailova N."/>
            <person name="Wu J.H.D."/>
            <person name="Newcomb M."/>
            <person name="Richardson P."/>
        </authorList>
    </citation>
    <scope>NUCLEOTIDE SEQUENCE [LARGE SCALE GENOMIC DNA]</scope>
    <source>
        <strain>ATCC 27405 / DSM 1237 / JCM 9322 / NBRC 103400 / NCIMB 10682 / NRRL B-4536 / VPI 7372</strain>
    </source>
</reference>
<name>RL35_ACET2</name>
<dbReference type="EMBL" id="CP000568">
    <property type="protein sequence ID" value="ABN52456.1"/>
    <property type="molecule type" value="Genomic_DNA"/>
</dbReference>
<dbReference type="RefSeq" id="WP_003518898.1">
    <property type="nucleotide sequence ID" value="NC_009012.1"/>
</dbReference>
<dbReference type="SMR" id="A3DES7"/>
<dbReference type="STRING" id="203119.Cthe_1224"/>
<dbReference type="GeneID" id="35804498"/>
<dbReference type="KEGG" id="cth:Cthe_1224"/>
<dbReference type="eggNOG" id="COG0291">
    <property type="taxonomic scope" value="Bacteria"/>
</dbReference>
<dbReference type="HOGENOM" id="CLU_169643_4_3_9"/>
<dbReference type="OrthoDB" id="47476at2"/>
<dbReference type="Proteomes" id="UP000002145">
    <property type="component" value="Chromosome"/>
</dbReference>
<dbReference type="GO" id="GO:0022625">
    <property type="term" value="C:cytosolic large ribosomal subunit"/>
    <property type="evidence" value="ECO:0007669"/>
    <property type="project" value="TreeGrafter"/>
</dbReference>
<dbReference type="GO" id="GO:0003735">
    <property type="term" value="F:structural constituent of ribosome"/>
    <property type="evidence" value="ECO:0007669"/>
    <property type="project" value="InterPro"/>
</dbReference>
<dbReference type="GO" id="GO:0006412">
    <property type="term" value="P:translation"/>
    <property type="evidence" value="ECO:0007669"/>
    <property type="project" value="UniProtKB-UniRule"/>
</dbReference>
<dbReference type="FunFam" id="4.10.410.60:FF:000001">
    <property type="entry name" value="50S ribosomal protein L35"/>
    <property type="match status" value="1"/>
</dbReference>
<dbReference type="Gene3D" id="4.10.410.60">
    <property type="match status" value="1"/>
</dbReference>
<dbReference type="HAMAP" id="MF_00514">
    <property type="entry name" value="Ribosomal_bL35"/>
    <property type="match status" value="1"/>
</dbReference>
<dbReference type="InterPro" id="IPR001706">
    <property type="entry name" value="Ribosomal_bL35"/>
</dbReference>
<dbReference type="InterPro" id="IPR021137">
    <property type="entry name" value="Ribosomal_bL35-like"/>
</dbReference>
<dbReference type="InterPro" id="IPR018265">
    <property type="entry name" value="Ribosomal_bL35_CS"/>
</dbReference>
<dbReference type="InterPro" id="IPR037229">
    <property type="entry name" value="Ribosomal_bL35_sf"/>
</dbReference>
<dbReference type="NCBIfam" id="TIGR00001">
    <property type="entry name" value="rpmI_bact"/>
    <property type="match status" value="1"/>
</dbReference>
<dbReference type="PANTHER" id="PTHR33343">
    <property type="entry name" value="54S RIBOSOMAL PROTEIN BL35M"/>
    <property type="match status" value="1"/>
</dbReference>
<dbReference type="PANTHER" id="PTHR33343:SF1">
    <property type="entry name" value="LARGE RIBOSOMAL SUBUNIT PROTEIN BL35M"/>
    <property type="match status" value="1"/>
</dbReference>
<dbReference type="Pfam" id="PF01632">
    <property type="entry name" value="Ribosomal_L35p"/>
    <property type="match status" value="1"/>
</dbReference>
<dbReference type="PRINTS" id="PR00064">
    <property type="entry name" value="RIBOSOMALL35"/>
</dbReference>
<dbReference type="SUPFAM" id="SSF143034">
    <property type="entry name" value="L35p-like"/>
    <property type="match status" value="1"/>
</dbReference>
<dbReference type="PROSITE" id="PS00936">
    <property type="entry name" value="RIBOSOMAL_L35"/>
    <property type="match status" value="1"/>
</dbReference>
<gene>
    <name evidence="1" type="primary">rpmI</name>
    <name type="ordered locus">Cthe_1224</name>
</gene>
<sequence length="65" mass="7356">MPKIKTHSSSKKRFKLTGTGKVKRAKAYKSHILTKKTSKRKRNLRKSTIASSANASVIKKLIPYK</sequence>
<keyword id="KW-1185">Reference proteome</keyword>
<keyword id="KW-0687">Ribonucleoprotein</keyword>
<keyword id="KW-0689">Ribosomal protein</keyword>
<protein>
    <recommendedName>
        <fullName evidence="1">Large ribosomal subunit protein bL35</fullName>
    </recommendedName>
    <alternativeName>
        <fullName evidence="2">50S ribosomal protein L35</fullName>
    </alternativeName>
</protein>
<accession>A3DES7</accession>
<organism>
    <name type="scientific">Acetivibrio thermocellus (strain ATCC 27405 / DSM 1237 / JCM 9322 / NBRC 103400 / NCIMB 10682 / NRRL B-4536 / VPI 7372)</name>
    <name type="common">Clostridium thermocellum</name>
    <dbReference type="NCBI Taxonomy" id="203119"/>
    <lineage>
        <taxon>Bacteria</taxon>
        <taxon>Bacillati</taxon>
        <taxon>Bacillota</taxon>
        <taxon>Clostridia</taxon>
        <taxon>Eubacteriales</taxon>
        <taxon>Oscillospiraceae</taxon>
        <taxon>Acetivibrio</taxon>
    </lineage>
</organism>